<protein>
    <recommendedName>
        <fullName evidence="1">Membrane protein insertase YidC</fullName>
    </recommendedName>
    <alternativeName>
        <fullName evidence="1">Foldase YidC</fullName>
    </alternativeName>
    <alternativeName>
        <fullName evidence="1">Membrane integrase YidC</fullName>
    </alternativeName>
    <alternativeName>
        <fullName evidence="1">Membrane protein YidC</fullName>
    </alternativeName>
</protein>
<sequence>MESQRNILLIGLLFVSFLLWQQWQADKAPQPVAQTQSSVAPSTVADAHSSDVPDADSALPETVTASKELITVTTDQFVLKIDPVGGDIVHSALLSHKLEQDGDDPFVLLEQTNDIYYIAQSGLIGRDGIDSSTTGRAHFDSASREYDLAGQDTLEVPLTYLAANGVTYTKLFTFYRGKHNVDVDYQINNTSDAQLQVQMYGQIKHSIKKSESSMMMPTYRGAAFSTADTRYEKYSFDDMADKNLNKSTLGGWVAMLQHYFVSAWVPPENDKNIIFSSVSAGGLANIGFRGALYDIAPGTEQSIKAQFYVGPKDQEALSALSESLNLVVDYGFLWWLAIPIHWLLMFYQSFVGNWGVAIILITLTVRGMLYPLTKAQYTSMAKMRNLQPKLADMKERFGDDRQKMGQAMMELYKKEKVNPMGGCLPILLQMPIFIALYWVLLESYELRHAPFMLWITDLSVQDPYYVMPILMGVSMFIMQKMQPMAPTMDPMQVKMMQWMPVIFTVFFLWFPAGLVLYWLVGNLVAITQQKIIYAGLEKKGLK</sequence>
<dbReference type="EMBL" id="CP000472">
    <property type="protein sequence ID" value="ACJ26860.1"/>
    <property type="molecule type" value="Genomic_DNA"/>
</dbReference>
<dbReference type="RefSeq" id="WP_020910245.1">
    <property type="nucleotide sequence ID" value="NC_011566.1"/>
</dbReference>
<dbReference type="SMR" id="B8CH68"/>
<dbReference type="STRING" id="225849.swp_0012"/>
<dbReference type="KEGG" id="swp:swp_0012"/>
<dbReference type="eggNOG" id="COG0706">
    <property type="taxonomic scope" value="Bacteria"/>
</dbReference>
<dbReference type="HOGENOM" id="CLU_016535_3_0_6"/>
<dbReference type="OrthoDB" id="9780552at2"/>
<dbReference type="Proteomes" id="UP000000753">
    <property type="component" value="Chromosome"/>
</dbReference>
<dbReference type="GO" id="GO:0005886">
    <property type="term" value="C:plasma membrane"/>
    <property type="evidence" value="ECO:0007669"/>
    <property type="project" value="UniProtKB-SubCell"/>
</dbReference>
<dbReference type="GO" id="GO:0032977">
    <property type="term" value="F:membrane insertase activity"/>
    <property type="evidence" value="ECO:0007669"/>
    <property type="project" value="InterPro"/>
</dbReference>
<dbReference type="GO" id="GO:0051205">
    <property type="term" value="P:protein insertion into membrane"/>
    <property type="evidence" value="ECO:0007669"/>
    <property type="project" value="TreeGrafter"/>
</dbReference>
<dbReference type="GO" id="GO:0015031">
    <property type="term" value="P:protein transport"/>
    <property type="evidence" value="ECO:0007669"/>
    <property type="project" value="UniProtKB-KW"/>
</dbReference>
<dbReference type="CDD" id="cd20070">
    <property type="entry name" value="5TM_YidC_Alb3"/>
    <property type="match status" value="1"/>
</dbReference>
<dbReference type="CDD" id="cd19961">
    <property type="entry name" value="EcYidC-like_peri"/>
    <property type="match status" value="1"/>
</dbReference>
<dbReference type="Gene3D" id="2.70.98.90">
    <property type="match status" value="1"/>
</dbReference>
<dbReference type="HAMAP" id="MF_01810">
    <property type="entry name" value="YidC_type1"/>
    <property type="match status" value="1"/>
</dbReference>
<dbReference type="InterPro" id="IPR019998">
    <property type="entry name" value="Membr_insert_YidC"/>
</dbReference>
<dbReference type="InterPro" id="IPR028053">
    <property type="entry name" value="Membr_insert_YidC_N"/>
</dbReference>
<dbReference type="InterPro" id="IPR001708">
    <property type="entry name" value="YidC/ALB3/OXA1/COX18"/>
</dbReference>
<dbReference type="InterPro" id="IPR028055">
    <property type="entry name" value="YidC/Oxa/ALB_C"/>
</dbReference>
<dbReference type="InterPro" id="IPR047196">
    <property type="entry name" value="YidC_ALB_C"/>
</dbReference>
<dbReference type="InterPro" id="IPR038221">
    <property type="entry name" value="YidC_periplasmic_sf"/>
</dbReference>
<dbReference type="NCBIfam" id="NF002351">
    <property type="entry name" value="PRK01318.1-1"/>
    <property type="match status" value="1"/>
</dbReference>
<dbReference type="NCBIfam" id="NF002352">
    <property type="entry name" value="PRK01318.1-3"/>
    <property type="match status" value="1"/>
</dbReference>
<dbReference type="NCBIfam" id="TIGR03593">
    <property type="entry name" value="yidC_nterm"/>
    <property type="match status" value="1"/>
</dbReference>
<dbReference type="NCBIfam" id="TIGR03592">
    <property type="entry name" value="yidC_oxa1_cterm"/>
    <property type="match status" value="1"/>
</dbReference>
<dbReference type="PANTHER" id="PTHR12428:SF65">
    <property type="entry name" value="CYTOCHROME C OXIDASE ASSEMBLY PROTEIN COX18, MITOCHONDRIAL"/>
    <property type="match status" value="1"/>
</dbReference>
<dbReference type="PANTHER" id="PTHR12428">
    <property type="entry name" value="OXA1"/>
    <property type="match status" value="1"/>
</dbReference>
<dbReference type="Pfam" id="PF02096">
    <property type="entry name" value="60KD_IMP"/>
    <property type="match status" value="1"/>
</dbReference>
<dbReference type="Pfam" id="PF14849">
    <property type="entry name" value="YidC_periplas"/>
    <property type="match status" value="1"/>
</dbReference>
<dbReference type="PRINTS" id="PR00701">
    <property type="entry name" value="60KDINNERMP"/>
</dbReference>
<dbReference type="PRINTS" id="PR01900">
    <property type="entry name" value="YIDCPROTEIN"/>
</dbReference>
<proteinExistence type="inferred from homology"/>
<keyword id="KW-0997">Cell inner membrane</keyword>
<keyword id="KW-1003">Cell membrane</keyword>
<keyword id="KW-0143">Chaperone</keyword>
<keyword id="KW-0472">Membrane</keyword>
<keyword id="KW-0653">Protein transport</keyword>
<keyword id="KW-0812">Transmembrane</keyword>
<keyword id="KW-1133">Transmembrane helix</keyword>
<keyword id="KW-0813">Transport</keyword>
<evidence type="ECO:0000255" key="1">
    <source>
        <dbReference type="HAMAP-Rule" id="MF_01810"/>
    </source>
</evidence>
<evidence type="ECO:0000256" key="2">
    <source>
        <dbReference type="SAM" id="MobiDB-lite"/>
    </source>
</evidence>
<accession>B8CH68</accession>
<name>YIDC_SHEPW</name>
<feature type="chain" id="PRO_1000187706" description="Membrane protein insertase YidC">
    <location>
        <begin position="1"/>
        <end position="542"/>
    </location>
</feature>
<feature type="transmembrane region" description="Helical" evidence="1">
    <location>
        <begin position="6"/>
        <end position="26"/>
    </location>
</feature>
<feature type="transmembrane region" description="Helical" evidence="1">
    <location>
        <begin position="326"/>
        <end position="346"/>
    </location>
</feature>
<feature type="transmembrane region" description="Helical" evidence="1">
    <location>
        <begin position="350"/>
        <end position="370"/>
    </location>
</feature>
<feature type="transmembrane region" description="Helical" evidence="1">
    <location>
        <begin position="421"/>
        <end position="441"/>
    </location>
</feature>
<feature type="transmembrane region" description="Helical" evidence="1">
    <location>
        <begin position="458"/>
        <end position="478"/>
    </location>
</feature>
<feature type="transmembrane region" description="Helical" evidence="1">
    <location>
        <begin position="501"/>
        <end position="521"/>
    </location>
</feature>
<feature type="region of interest" description="Disordered" evidence="2">
    <location>
        <begin position="32"/>
        <end position="57"/>
    </location>
</feature>
<feature type="compositionally biased region" description="Polar residues" evidence="2">
    <location>
        <begin position="32"/>
        <end position="41"/>
    </location>
</feature>
<organism>
    <name type="scientific">Shewanella piezotolerans (strain WP3 / JCM 13877)</name>
    <dbReference type="NCBI Taxonomy" id="225849"/>
    <lineage>
        <taxon>Bacteria</taxon>
        <taxon>Pseudomonadati</taxon>
        <taxon>Pseudomonadota</taxon>
        <taxon>Gammaproteobacteria</taxon>
        <taxon>Alteromonadales</taxon>
        <taxon>Shewanellaceae</taxon>
        <taxon>Shewanella</taxon>
    </lineage>
</organism>
<reference key="1">
    <citation type="journal article" date="2008" name="PLoS ONE">
        <title>Environmental adaptation: genomic analysis of the piezotolerant and psychrotolerant deep-sea iron reducing bacterium Shewanella piezotolerans WP3.</title>
        <authorList>
            <person name="Wang F."/>
            <person name="Wang J."/>
            <person name="Jian H."/>
            <person name="Zhang B."/>
            <person name="Li S."/>
            <person name="Wang F."/>
            <person name="Zeng X."/>
            <person name="Gao L."/>
            <person name="Bartlett D.H."/>
            <person name="Yu J."/>
            <person name="Hu S."/>
            <person name="Xiao X."/>
        </authorList>
    </citation>
    <scope>NUCLEOTIDE SEQUENCE [LARGE SCALE GENOMIC DNA]</scope>
    <source>
        <strain>WP3 / JCM 13877</strain>
    </source>
</reference>
<comment type="function">
    <text evidence="1">Required for the insertion and/or proper folding and/or complex formation of integral membrane proteins into the membrane. Involved in integration of membrane proteins that insert both dependently and independently of the Sec translocase complex, as well as at least some lipoproteins. Aids folding of multispanning membrane proteins.</text>
</comment>
<comment type="subunit">
    <text evidence="1">Interacts with the Sec translocase complex via SecD. Specifically interacts with transmembrane segments of nascent integral membrane proteins during membrane integration.</text>
</comment>
<comment type="subcellular location">
    <subcellularLocation>
        <location evidence="1">Cell inner membrane</location>
        <topology evidence="1">Multi-pass membrane protein</topology>
    </subcellularLocation>
</comment>
<comment type="similarity">
    <text evidence="1">Belongs to the OXA1/ALB3/YidC family. Type 1 subfamily.</text>
</comment>
<gene>
    <name evidence="1" type="primary">yidC</name>
    <name type="ordered locus">swp_0012</name>
</gene>